<proteinExistence type="inferred from homology"/>
<reference key="1">
    <citation type="journal article" date="2010" name="PLoS ONE">
        <title>Genome sequence of Cronobacter sakazakii BAA-894 and comparative genomic hybridization analysis with other Cronobacter species.</title>
        <authorList>
            <person name="Kucerova E."/>
            <person name="Clifton S.W."/>
            <person name="Xia X.Q."/>
            <person name="Long F."/>
            <person name="Porwollik S."/>
            <person name="Fulton L."/>
            <person name="Fronick C."/>
            <person name="Minx P."/>
            <person name="Kyung K."/>
            <person name="Warren W."/>
            <person name="Fulton R."/>
            <person name="Feng D."/>
            <person name="Wollam A."/>
            <person name="Shah N."/>
            <person name="Bhonagiri V."/>
            <person name="Nash W.E."/>
            <person name="Hallsworth-Pepin K."/>
            <person name="Wilson R.K."/>
            <person name="McClelland M."/>
            <person name="Forsythe S.J."/>
        </authorList>
    </citation>
    <scope>NUCLEOTIDE SEQUENCE [LARGE SCALE GENOMIC DNA]</scope>
    <source>
        <strain>ATCC BAA-894</strain>
    </source>
</reference>
<dbReference type="EC" id="3.1.21.2" evidence="1"/>
<dbReference type="EMBL" id="CP000783">
    <property type="protein sequence ID" value="ABU76346.1"/>
    <property type="molecule type" value="Genomic_DNA"/>
</dbReference>
<dbReference type="RefSeq" id="WP_012124269.1">
    <property type="nucleotide sequence ID" value="NC_009778.1"/>
</dbReference>
<dbReference type="SMR" id="A7MLL2"/>
<dbReference type="GeneID" id="56729947"/>
<dbReference type="KEGG" id="esa:ESA_01078"/>
<dbReference type="PATRIC" id="fig|290339.8.peg.953"/>
<dbReference type="HOGENOM" id="CLU_025885_0_4_6"/>
<dbReference type="Proteomes" id="UP000000260">
    <property type="component" value="Chromosome"/>
</dbReference>
<dbReference type="GO" id="GO:0008833">
    <property type="term" value="F:deoxyribonuclease IV (phage-T4-induced) activity"/>
    <property type="evidence" value="ECO:0007669"/>
    <property type="project" value="UniProtKB-UniRule"/>
</dbReference>
<dbReference type="GO" id="GO:0003677">
    <property type="term" value="F:DNA binding"/>
    <property type="evidence" value="ECO:0007669"/>
    <property type="project" value="InterPro"/>
</dbReference>
<dbReference type="GO" id="GO:0003906">
    <property type="term" value="F:DNA-(apurinic or apyrimidinic site) endonuclease activity"/>
    <property type="evidence" value="ECO:0007669"/>
    <property type="project" value="TreeGrafter"/>
</dbReference>
<dbReference type="GO" id="GO:0008081">
    <property type="term" value="F:phosphoric diester hydrolase activity"/>
    <property type="evidence" value="ECO:0007669"/>
    <property type="project" value="TreeGrafter"/>
</dbReference>
<dbReference type="GO" id="GO:0008270">
    <property type="term" value="F:zinc ion binding"/>
    <property type="evidence" value="ECO:0007669"/>
    <property type="project" value="UniProtKB-UniRule"/>
</dbReference>
<dbReference type="GO" id="GO:0006284">
    <property type="term" value="P:base-excision repair"/>
    <property type="evidence" value="ECO:0007669"/>
    <property type="project" value="TreeGrafter"/>
</dbReference>
<dbReference type="CDD" id="cd00019">
    <property type="entry name" value="AP2Ec"/>
    <property type="match status" value="1"/>
</dbReference>
<dbReference type="FunFam" id="3.20.20.150:FF:000001">
    <property type="entry name" value="Probable endonuclease 4"/>
    <property type="match status" value="1"/>
</dbReference>
<dbReference type="Gene3D" id="3.20.20.150">
    <property type="entry name" value="Divalent-metal-dependent TIM barrel enzymes"/>
    <property type="match status" value="1"/>
</dbReference>
<dbReference type="HAMAP" id="MF_00152">
    <property type="entry name" value="Nfo"/>
    <property type="match status" value="1"/>
</dbReference>
<dbReference type="InterPro" id="IPR001719">
    <property type="entry name" value="AP_endonuc_2"/>
</dbReference>
<dbReference type="InterPro" id="IPR018246">
    <property type="entry name" value="AP_endonuc_F2_Zn_BS"/>
</dbReference>
<dbReference type="InterPro" id="IPR036237">
    <property type="entry name" value="Xyl_isomerase-like_sf"/>
</dbReference>
<dbReference type="InterPro" id="IPR013022">
    <property type="entry name" value="Xyl_isomerase-like_TIM-brl"/>
</dbReference>
<dbReference type="NCBIfam" id="TIGR00587">
    <property type="entry name" value="nfo"/>
    <property type="match status" value="1"/>
</dbReference>
<dbReference type="NCBIfam" id="NF002199">
    <property type="entry name" value="PRK01060.1-4"/>
    <property type="match status" value="1"/>
</dbReference>
<dbReference type="PANTHER" id="PTHR21445:SF0">
    <property type="entry name" value="APURINIC-APYRIMIDINIC ENDONUCLEASE"/>
    <property type="match status" value="1"/>
</dbReference>
<dbReference type="PANTHER" id="PTHR21445">
    <property type="entry name" value="ENDONUCLEASE IV ENDODEOXYRIBONUCLEASE IV"/>
    <property type="match status" value="1"/>
</dbReference>
<dbReference type="Pfam" id="PF01261">
    <property type="entry name" value="AP_endonuc_2"/>
    <property type="match status" value="1"/>
</dbReference>
<dbReference type="SMART" id="SM00518">
    <property type="entry name" value="AP2Ec"/>
    <property type="match status" value="1"/>
</dbReference>
<dbReference type="SUPFAM" id="SSF51658">
    <property type="entry name" value="Xylose isomerase-like"/>
    <property type="match status" value="1"/>
</dbReference>
<dbReference type="PROSITE" id="PS00730">
    <property type="entry name" value="AP_NUCLEASE_F2_2"/>
    <property type="match status" value="1"/>
</dbReference>
<dbReference type="PROSITE" id="PS00731">
    <property type="entry name" value="AP_NUCLEASE_F2_3"/>
    <property type="match status" value="1"/>
</dbReference>
<dbReference type="PROSITE" id="PS51432">
    <property type="entry name" value="AP_NUCLEASE_F2_4"/>
    <property type="match status" value="1"/>
</dbReference>
<feature type="chain" id="PRO_1000011306" description="Probable endonuclease 4">
    <location>
        <begin position="1"/>
        <end position="285"/>
    </location>
</feature>
<feature type="binding site" evidence="1">
    <location>
        <position position="69"/>
    </location>
    <ligand>
        <name>Zn(2+)</name>
        <dbReference type="ChEBI" id="CHEBI:29105"/>
        <label>1</label>
    </ligand>
</feature>
<feature type="binding site" evidence="1">
    <location>
        <position position="109"/>
    </location>
    <ligand>
        <name>Zn(2+)</name>
        <dbReference type="ChEBI" id="CHEBI:29105"/>
        <label>1</label>
    </ligand>
</feature>
<feature type="binding site" evidence="1">
    <location>
        <position position="145"/>
    </location>
    <ligand>
        <name>Zn(2+)</name>
        <dbReference type="ChEBI" id="CHEBI:29105"/>
        <label>1</label>
    </ligand>
</feature>
<feature type="binding site" evidence="1">
    <location>
        <position position="145"/>
    </location>
    <ligand>
        <name>Zn(2+)</name>
        <dbReference type="ChEBI" id="CHEBI:29105"/>
        <label>2</label>
    </ligand>
</feature>
<feature type="binding site" evidence="1">
    <location>
        <position position="179"/>
    </location>
    <ligand>
        <name>Zn(2+)</name>
        <dbReference type="ChEBI" id="CHEBI:29105"/>
        <label>2</label>
    </ligand>
</feature>
<feature type="binding site" evidence="1">
    <location>
        <position position="182"/>
    </location>
    <ligand>
        <name>Zn(2+)</name>
        <dbReference type="ChEBI" id="CHEBI:29105"/>
        <label>3</label>
    </ligand>
</feature>
<feature type="binding site" evidence="1">
    <location>
        <position position="216"/>
    </location>
    <ligand>
        <name>Zn(2+)</name>
        <dbReference type="ChEBI" id="CHEBI:29105"/>
        <label>2</label>
    </ligand>
</feature>
<feature type="binding site" evidence="1">
    <location>
        <position position="229"/>
    </location>
    <ligand>
        <name>Zn(2+)</name>
        <dbReference type="ChEBI" id="CHEBI:29105"/>
        <label>3</label>
    </ligand>
</feature>
<feature type="binding site" evidence="1">
    <location>
        <position position="231"/>
    </location>
    <ligand>
        <name>Zn(2+)</name>
        <dbReference type="ChEBI" id="CHEBI:29105"/>
        <label>3</label>
    </ligand>
</feature>
<feature type="binding site" evidence="1">
    <location>
        <position position="261"/>
    </location>
    <ligand>
        <name>Zn(2+)</name>
        <dbReference type="ChEBI" id="CHEBI:29105"/>
        <label>2</label>
    </ligand>
</feature>
<sequence>MKFIGAHVSASGGVANAPARAAEIGATAFALFTKNQRQWRAAALTPAVIDEFKAACRKHGYGPGQILPHDSFLINLGHPEPEALEKSRAAFIDELARCAQLGLTLLNFHPGSHLQQLSEEACLSRIAESVNIALDKTEGVTAVIENTAGQGSNLGFRFEHLAAIIDQVEDKSRVGVCIDTCHAFAAGYDLRTEEDCEKTFAEFDRIVGFQYLRGMHLNDAKSTFASRVDRHHSLGEGNIGFTPFRWIMQQSHFDNIPLILETINPDIWNEEIAWLKAQQTGGAQA</sequence>
<gene>
    <name evidence="1" type="primary">nfo</name>
    <name type="ordered locus">ESA_01078</name>
</gene>
<protein>
    <recommendedName>
        <fullName evidence="1">Probable endonuclease 4</fullName>
        <ecNumber evidence="1">3.1.21.2</ecNumber>
    </recommendedName>
    <alternativeName>
        <fullName evidence="1">Endodeoxyribonuclease IV</fullName>
    </alternativeName>
    <alternativeName>
        <fullName evidence="1">Endonuclease IV</fullName>
    </alternativeName>
</protein>
<accession>A7MLL2</accession>
<comment type="function">
    <text evidence="1">Endonuclease IV plays a role in DNA repair. It cleaves phosphodiester bonds at apurinic or apyrimidinic (AP) sites, generating a 3'-hydroxyl group and a 5'-terminal sugar phosphate.</text>
</comment>
<comment type="catalytic activity">
    <reaction evidence="1">
        <text>Endonucleolytic cleavage to 5'-phosphooligonucleotide end-products.</text>
        <dbReference type="EC" id="3.1.21.2"/>
    </reaction>
</comment>
<comment type="cofactor">
    <cofactor evidence="1">
        <name>Zn(2+)</name>
        <dbReference type="ChEBI" id="CHEBI:29105"/>
    </cofactor>
    <text evidence="1">Binds 3 Zn(2+) ions.</text>
</comment>
<comment type="similarity">
    <text evidence="1">Belongs to the AP endonuclease 2 family.</text>
</comment>
<keyword id="KW-0227">DNA damage</keyword>
<keyword id="KW-0234">DNA repair</keyword>
<keyword id="KW-0255">Endonuclease</keyword>
<keyword id="KW-0378">Hydrolase</keyword>
<keyword id="KW-0479">Metal-binding</keyword>
<keyword id="KW-0540">Nuclease</keyword>
<keyword id="KW-1185">Reference proteome</keyword>
<keyword id="KW-0862">Zinc</keyword>
<name>END4_CROS8</name>
<evidence type="ECO:0000255" key="1">
    <source>
        <dbReference type="HAMAP-Rule" id="MF_00152"/>
    </source>
</evidence>
<organism>
    <name type="scientific">Cronobacter sakazakii (strain ATCC BAA-894)</name>
    <name type="common">Enterobacter sakazakii</name>
    <dbReference type="NCBI Taxonomy" id="290339"/>
    <lineage>
        <taxon>Bacteria</taxon>
        <taxon>Pseudomonadati</taxon>
        <taxon>Pseudomonadota</taxon>
        <taxon>Gammaproteobacteria</taxon>
        <taxon>Enterobacterales</taxon>
        <taxon>Enterobacteriaceae</taxon>
        <taxon>Cronobacter</taxon>
    </lineage>
</organism>